<name>ASTD_PSEPW</name>
<evidence type="ECO:0000255" key="1">
    <source>
        <dbReference type="HAMAP-Rule" id="MF_01174"/>
    </source>
</evidence>
<accession>B1JCH3</accession>
<dbReference type="EC" id="1.2.1.71" evidence="1"/>
<dbReference type="EMBL" id="CP000949">
    <property type="protein sequence ID" value="ACA74249.1"/>
    <property type="molecule type" value="Genomic_DNA"/>
</dbReference>
<dbReference type="SMR" id="B1JCH3"/>
<dbReference type="STRING" id="390235.PputW619_3767"/>
<dbReference type="KEGG" id="ppw:PputW619_3767"/>
<dbReference type="eggNOG" id="COG1012">
    <property type="taxonomic scope" value="Bacteria"/>
</dbReference>
<dbReference type="HOGENOM" id="CLU_005391_1_0_6"/>
<dbReference type="OrthoDB" id="9812625at2"/>
<dbReference type="UniPathway" id="UPA00185">
    <property type="reaction ID" value="UER00282"/>
</dbReference>
<dbReference type="GO" id="GO:0043824">
    <property type="term" value="F:succinylglutamate-semialdehyde dehydrogenase activity"/>
    <property type="evidence" value="ECO:0007669"/>
    <property type="project" value="UniProtKB-EC"/>
</dbReference>
<dbReference type="GO" id="GO:0019544">
    <property type="term" value="P:arginine catabolic process to glutamate"/>
    <property type="evidence" value="ECO:0007669"/>
    <property type="project" value="UniProtKB-UniRule"/>
</dbReference>
<dbReference type="GO" id="GO:0019545">
    <property type="term" value="P:arginine catabolic process to succinate"/>
    <property type="evidence" value="ECO:0007669"/>
    <property type="project" value="UniProtKB-UniRule"/>
</dbReference>
<dbReference type="CDD" id="cd07095">
    <property type="entry name" value="ALDH_SGSD_AstD"/>
    <property type="match status" value="1"/>
</dbReference>
<dbReference type="FunFam" id="3.40.309.10:FF:000013">
    <property type="entry name" value="N-succinylglutamate 5-semialdehyde dehydrogenase"/>
    <property type="match status" value="1"/>
</dbReference>
<dbReference type="FunFam" id="3.40.605.10:FF:000010">
    <property type="entry name" value="N-succinylglutamate 5-semialdehyde dehydrogenase"/>
    <property type="match status" value="1"/>
</dbReference>
<dbReference type="Gene3D" id="3.40.605.10">
    <property type="entry name" value="Aldehyde Dehydrogenase, Chain A, domain 1"/>
    <property type="match status" value="1"/>
</dbReference>
<dbReference type="Gene3D" id="3.40.309.10">
    <property type="entry name" value="Aldehyde Dehydrogenase, Chain A, domain 2"/>
    <property type="match status" value="1"/>
</dbReference>
<dbReference type="HAMAP" id="MF_01174">
    <property type="entry name" value="Aldedh_AstD"/>
    <property type="match status" value="1"/>
</dbReference>
<dbReference type="InterPro" id="IPR016161">
    <property type="entry name" value="Ald_DH/histidinol_DH"/>
</dbReference>
<dbReference type="InterPro" id="IPR016163">
    <property type="entry name" value="Ald_DH_C"/>
</dbReference>
<dbReference type="InterPro" id="IPR016160">
    <property type="entry name" value="Ald_DH_CS_CYS"/>
</dbReference>
<dbReference type="InterPro" id="IPR029510">
    <property type="entry name" value="Ald_DH_CS_GLU"/>
</dbReference>
<dbReference type="InterPro" id="IPR016162">
    <property type="entry name" value="Ald_DH_N"/>
</dbReference>
<dbReference type="InterPro" id="IPR015590">
    <property type="entry name" value="Aldehyde_DH_dom"/>
</dbReference>
<dbReference type="InterPro" id="IPR017649">
    <property type="entry name" value="SuccinylGlu_semiald_DH_AstD"/>
</dbReference>
<dbReference type="NCBIfam" id="TIGR03240">
    <property type="entry name" value="arg_catab_astD"/>
    <property type="match status" value="1"/>
</dbReference>
<dbReference type="NCBIfam" id="NF006992">
    <property type="entry name" value="PRK09457.1"/>
    <property type="match status" value="1"/>
</dbReference>
<dbReference type="PANTHER" id="PTHR11699">
    <property type="entry name" value="ALDEHYDE DEHYDROGENASE-RELATED"/>
    <property type="match status" value="1"/>
</dbReference>
<dbReference type="Pfam" id="PF00171">
    <property type="entry name" value="Aldedh"/>
    <property type="match status" value="1"/>
</dbReference>
<dbReference type="SUPFAM" id="SSF53720">
    <property type="entry name" value="ALDH-like"/>
    <property type="match status" value="1"/>
</dbReference>
<dbReference type="PROSITE" id="PS00070">
    <property type="entry name" value="ALDEHYDE_DEHYDR_CYS"/>
    <property type="match status" value="1"/>
</dbReference>
<dbReference type="PROSITE" id="PS00687">
    <property type="entry name" value="ALDEHYDE_DEHYDR_GLU"/>
    <property type="match status" value="1"/>
</dbReference>
<sequence length="487" mass="51365">MTTHYIAGSWQAGQGEALQSLNPVTQAVVWQGQGADASQVDAAVLAARQAFPAWAQLSLEARIDVLEKFAEQLKQHSEALAYCIGEETGKPLWESATEVTSMVNKVAISIQSYRERTGEKSGPLADATAVLRHKPHGVVAVFGPYNFPGHLPNGHIVPALLAGNCVVFKPSELTPKVAELTVNCWIAAGLPAGVLNLVQGARETGVALAANPGIDGLFFTGSSRTGNLLHQQFAGRPDKILALEMGGNNPLVVDGVKDLDAAVYTIIQSAFISAGQRCTCARRLLVPQGAWGDALVIRLVEVCKSITVGAFDQQPAPFMGSVISLQAARALVAAQSELLAKGATQLLEMTQPQADAALLTPGIIDVTAVADRPDEEFFGPLLQVIRYADFDAAIDEANNTQYGLAAGLLSDSRARYQYFWLRSRAGIVNWNKQLTGAASSAPFGGIGASGNHRASAYYAADYCAYPVASLETASLALPATLTPGVTL</sequence>
<proteinExistence type="inferred from homology"/>
<comment type="function">
    <text evidence="1">Catalyzes the NAD-dependent reduction of succinylglutamate semialdehyde into succinylglutamate.</text>
</comment>
<comment type="catalytic activity">
    <reaction evidence="1">
        <text>N-succinyl-L-glutamate 5-semialdehyde + NAD(+) + H2O = N-succinyl-L-glutamate + NADH + 2 H(+)</text>
        <dbReference type="Rhea" id="RHEA:10812"/>
        <dbReference type="ChEBI" id="CHEBI:15377"/>
        <dbReference type="ChEBI" id="CHEBI:15378"/>
        <dbReference type="ChEBI" id="CHEBI:57540"/>
        <dbReference type="ChEBI" id="CHEBI:57945"/>
        <dbReference type="ChEBI" id="CHEBI:58520"/>
        <dbReference type="ChEBI" id="CHEBI:58763"/>
        <dbReference type="EC" id="1.2.1.71"/>
    </reaction>
</comment>
<comment type="pathway">
    <text evidence="1">Amino-acid degradation; L-arginine degradation via AST pathway; L-glutamate and succinate from L-arginine: step 4/5.</text>
</comment>
<comment type="similarity">
    <text evidence="1">Belongs to the aldehyde dehydrogenase family. AstD subfamily.</text>
</comment>
<gene>
    <name evidence="1" type="primary">astD</name>
    <name type="ordered locus">PputW619_3767</name>
</gene>
<feature type="chain" id="PRO_1000138052" description="N-succinylglutamate 5-semialdehyde dehydrogenase">
    <location>
        <begin position="1"/>
        <end position="487"/>
    </location>
</feature>
<feature type="active site" evidence="1">
    <location>
        <position position="244"/>
    </location>
</feature>
<feature type="active site" evidence="1">
    <location>
        <position position="278"/>
    </location>
</feature>
<feature type="binding site" evidence="1">
    <location>
        <begin position="221"/>
        <end position="226"/>
    </location>
    <ligand>
        <name>NAD(+)</name>
        <dbReference type="ChEBI" id="CHEBI:57540"/>
    </ligand>
</feature>
<keyword id="KW-0056">Arginine metabolism</keyword>
<keyword id="KW-0520">NAD</keyword>
<keyword id="KW-0560">Oxidoreductase</keyword>
<organism>
    <name type="scientific">Pseudomonas putida (strain W619)</name>
    <dbReference type="NCBI Taxonomy" id="390235"/>
    <lineage>
        <taxon>Bacteria</taxon>
        <taxon>Pseudomonadati</taxon>
        <taxon>Pseudomonadota</taxon>
        <taxon>Gammaproteobacteria</taxon>
        <taxon>Pseudomonadales</taxon>
        <taxon>Pseudomonadaceae</taxon>
        <taxon>Pseudomonas</taxon>
    </lineage>
</organism>
<reference key="1">
    <citation type="submission" date="2008-02" db="EMBL/GenBank/DDBJ databases">
        <title>Complete sequence of Pseudomonas putida W619.</title>
        <authorList>
            <person name="Copeland A."/>
            <person name="Lucas S."/>
            <person name="Lapidus A."/>
            <person name="Barry K."/>
            <person name="Detter J.C."/>
            <person name="Glavina del Rio T."/>
            <person name="Dalin E."/>
            <person name="Tice H."/>
            <person name="Pitluck S."/>
            <person name="Chain P."/>
            <person name="Malfatti S."/>
            <person name="Shin M."/>
            <person name="Vergez L."/>
            <person name="Schmutz J."/>
            <person name="Larimer F."/>
            <person name="Land M."/>
            <person name="Hauser L."/>
            <person name="Kyrpides N."/>
            <person name="Kim E."/>
            <person name="Taghavi S."/>
            <person name="Vangronsveld D."/>
            <person name="van der Lelie D."/>
            <person name="Richardson P."/>
        </authorList>
    </citation>
    <scope>NUCLEOTIDE SEQUENCE [LARGE SCALE GENOMIC DNA]</scope>
    <source>
        <strain>W619</strain>
    </source>
</reference>
<protein>
    <recommendedName>
        <fullName evidence="1">N-succinylglutamate 5-semialdehyde dehydrogenase</fullName>
        <ecNumber evidence="1">1.2.1.71</ecNumber>
    </recommendedName>
    <alternativeName>
        <fullName evidence="1">Succinylglutamic semialdehyde dehydrogenase</fullName>
        <shortName evidence="1">SGSD</shortName>
    </alternativeName>
</protein>